<name>RL5_AZOVD</name>
<keyword id="KW-0687">Ribonucleoprotein</keyword>
<keyword id="KW-0689">Ribosomal protein</keyword>
<keyword id="KW-0694">RNA-binding</keyword>
<keyword id="KW-0699">rRNA-binding</keyword>
<keyword id="KW-0820">tRNA-binding</keyword>
<sequence>MARLKEIYRNEIAPKLKNELQLVNVMEVPRITKITLNMGLGEAVGDKKVIENAVADLEKITGQKPVVTYARKSIAGFKIREGWPIGVKVTLRRDRMYEFLDRLLSISLPRVRDFRGLNAKSFDGRGNYSMGVKEQIIFPEIDYDKIDALRGLDITLTTTARTDDEGRALLRAFNFPFRN</sequence>
<protein>
    <recommendedName>
        <fullName evidence="1">Large ribosomal subunit protein uL5</fullName>
    </recommendedName>
    <alternativeName>
        <fullName evidence="2">50S ribosomal protein L5</fullName>
    </alternativeName>
</protein>
<organism>
    <name type="scientific">Azotobacter vinelandii (strain DJ / ATCC BAA-1303)</name>
    <dbReference type="NCBI Taxonomy" id="322710"/>
    <lineage>
        <taxon>Bacteria</taxon>
        <taxon>Pseudomonadati</taxon>
        <taxon>Pseudomonadota</taxon>
        <taxon>Gammaproteobacteria</taxon>
        <taxon>Pseudomonadales</taxon>
        <taxon>Pseudomonadaceae</taxon>
        <taxon>Azotobacter</taxon>
    </lineage>
</organism>
<comment type="function">
    <text evidence="1">This is one of the proteins that bind and probably mediate the attachment of the 5S RNA into the large ribosomal subunit, where it forms part of the central protuberance. In the 70S ribosome it contacts protein S13 of the 30S subunit (bridge B1b), connecting the 2 subunits; this bridge is implicated in subunit movement. Contacts the P site tRNA; the 5S rRNA and some of its associated proteins might help stabilize positioning of ribosome-bound tRNAs.</text>
</comment>
<comment type="subunit">
    <text evidence="1">Part of the 50S ribosomal subunit; part of the 5S rRNA/L5/L18/L25 subcomplex. Contacts the 5S rRNA and the P site tRNA. Forms a bridge to the 30S subunit in the 70S ribosome.</text>
</comment>
<comment type="similarity">
    <text evidence="1">Belongs to the universal ribosomal protein uL5 family.</text>
</comment>
<reference key="1">
    <citation type="journal article" date="2009" name="J. Bacteriol.">
        <title>Genome sequence of Azotobacter vinelandii, an obligate aerobe specialized to support diverse anaerobic metabolic processes.</title>
        <authorList>
            <person name="Setubal J.C."/>
            <person name="Dos Santos P."/>
            <person name="Goldman B.S."/>
            <person name="Ertesvaag H."/>
            <person name="Espin G."/>
            <person name="Rubio L.M."/>
            <person name="Valla S."/>
            <person name="Almeida N.F."/>
            <person name="Balasubramanian D."/>
            <person name="Cromes L."/>
            <person name="Curatti L."/>
            <person name="Du Z."/>
            <person name="Godsy E."/>
            <person name="Goodner B."/>
            <person name="Hellner-Burris K."/>
            <person name="Hernandez J.A."/>
            <person name="Houmiel K."/>
            <person name="Imperial J."/>
            <person name="Kennedy C."/>
            <person name="Larson T.J."/>
            <person name="Latreille P."/>
            <person name="Ligon L.S."/>
            <person name="Lu J."/>
            <person name="Maerk M."/>
            <person name="Miller N.M."/>
            <person name="Norton S."/>
            <person name="O'Carroll I.P."/>
            <person name="Paulsen I."/>
            <person name="Raulfs E.C."/>
            <person name="Roemer R."/>
            <person name="Rosser J."/>
            <person name="Segura D."/>
            <person name="Slater S."/>
            <person name="Stricklin S.L."/>
            <person name="Studholme D.J."/>
            <person name="Sun J."/>
            <person name="Viana C.J."/>
            <person name="Wallin E."/>
            <person name="Wang B."/>
            <person name="Wheeler C."/>
            <person name="Zhu H."/>
            <person name="Dean D.R."/>
            <person name="Dixon R."/>
            <person name="Wood D."/>
        </authorList>
    </citation>
    <scope>NUCLEOTIDE SEQUENCE [LARGE SCALE GENOMIC DNA]</scope>
    <source>
        <strain>DJ / ATCC BAA-1303</strain>
    </source>
</reference>
<feature type="chain" id="PRO_1000214620" description="Large ribosomal subunit protein uL5">
    <location>
        <begin position="1"/>
        <end position="179"/>
    </location>
</feature>
<evidence type="ECO:0000255" key="1">
    <source>
        <dbReference type="HAMAP-Rule" id="MF_01333"/>
    </source>
</evidence>
<evidence type="ECO:0000305" key="2"/>
<proteinExistence type="inferred from homology"/>
<accession>C1DKM5</accession>
<gene>
    <name evidence="1" type="primary">rplE</name>
    <name type="ordered locus">Avin_06370</name>
</gene>
<dbReference type="EMBL" id="CP001157">
    <property type="protein sequence ID" value="ACO76888.1"/>
    <property type="molecule type" value="Genomic_DNA"/>
</dbReference>
<dbReference type="RefSeq" id="WP_012699314.1">
    <property type="nucleotide sequence ID" value="NC_012560.1"/>
</dbReference>
<dbReference type="SMR" id="C1DKM5"/>
<dbReference type="STRING" id="322710.Avin_06370"/>
<dbReference type="EnsemblBacteria" id="ACO76888">
    <property type="protein sequence ID" value="ACO76888"/>
    <property type="gene ID" value="Avin_06370"/>
</dbReference>
<dbReference type="GeneID" id="88184048"/>
<dbReference type="KEGG" id="avn:Avin_06370"/>
<dbReference type="eggNOG" id="COG0094">
    <property type="taxonomic scope" value="Bacteria"/>
</dbReference>
<dbReference type="HOGENOM" id="CLU_061015_2_1_6"/>
<dbReference type="OrthoDB" id="9806626at2"/>
<dbReference type="Proteomes" id="UP000002424">
    <property type="component" value="Chromosome"/>
</dbReference>
<dbReference type="GO" id="GO:1990904">
    <property type="term" value="C:ribonucleoprotein complex"/>
    <property type="evidence" value="ECO:0007669"/>
    <property type="project" value="UniProtKB-KW"/>
</dbReference>
<dbReference type="GO" id="GO:0005840">
    <property type="term" value="C:ribosome"/>
    <property type="evidence" value="ECO:0007669"/>
    <property type="project" value="UniProtKB-KW"/>
</dbReference>
<dbReference type="GO" id="GO:0019843">
    <property type="term" value="F:rRNA binding"/>
    <property type="evidence" value="ECO:0007669"/>
    <property type="project" value="UniProtKB-UniRule"/>
</dbReference>
<dbReference type="GO" id="GO:0003735">
    <property type="term" value="F:structural constituent of ribosome"/>
    <property type="evidence" value="ECO:0007669"/>
    <property type="project" value="InterPro"/>
</dbReference>
<dbReference type="GO" id="GO:0000049">
    <property type="term" value="F:tRNA binding"/>
    <property type="evidence" value="ECO:0007669"/>
    <property type="project" value="UniProtKB-UniRule"/>
</dbReference>
<dbReference type="GO" id="GO:0006412">
    <property type="term" value="P:translation"/>
    <property type="evidence" value="ECO:0007669"/>
    <property type="project" value="UniProtKB-UniRule"/>
</dbReference>
<dbReference type="FunFam" id="3.30.1440.10:FF:000001">
    <property type="entry name" value="50S ribosomal protein L5"/>
    <property type="match status" value="1"/>
</dbReference>
<dbReference type="Gene3D" id="3.30.1440.10">
    <property type="match status" value="1"/>
</dbReference>
<dbReference type="HAMAP" id="MF_01333_B">
    <property type="entry name" value="Ribosomal_uL5_B"/>
    <property type="match status" value="1"/>
</dbReference>
<dbReference type="InterPro" id="IPR002132">
    <property type="entry name" value="Ribosomal_uL5"/>
</dbReference>
<dbReference type="InterPro" id="IPR020930">
    <property type="entry name" value="Ribosomal_uL5_bac-type"/>
</dbReference>
<dbReference type="InterPro" id="IPR031309">
    <property type="entry name" value="Ribosomal_uL5_C"/>
</dbReference>
<dbReference type="InterPro" id="IPR020929">
    <property type="entry name" value="Ribosomal_uL5_CS"/>
</dbReference>
<dbReference type="InterPro" id="IPR022803">
    <property type="entry name" value="Ribosomal_uL5_dom_sf"/>
</dbReference>
<dbReference type="InterPro" id="IPR031310">
    <property type="entry name" value="Ribosomal_uL5_N"/>
</dbReference>
<dbReference type="NCBIfam" id="NF000585">
    <property type="entry name" value="PRK00010.1"/>
    <property type="match status" value="1"/>
</dbReference>
<dbReference type="PANTHER" id="PTHR11994">
    <property type="entry name" value="60S RIBOSOMAL PROTEIN L11-RELATED"/>
    <property type="match status" value="1"/>
</dbReference>
<dbReference type="Pfam" id="PF00281">
    <property type="entry name" value="Ribosomal_L5"/>
    <property type="match status" value="1"/>
</dbReference>
<dbReference type="Pfam" id="PF00673">
    <property type="entry name" value="Ribosomal_L5_C"/>
    <property type="match status" value="1"/>
</dbReference>
<dbReference type="PIRSF" id="PIRSF002161">
    <property type="entry name" value="Ribosomal_L5"/>
    <property type="match status" value="1"/>
</dbReference>
<dbReference type="SUPFAM" id="SSF55282">
    <property type="entry name" value="RL5-like"/>
    <property type="match status" value="1"/>
</dbReference>
<dbReference type="PROSITE" id="PS00358">
    <property type="entry name" value="RIBOSOMAL_L5"/>
    <property type="match status" value="1"/>
</dbReference>